<sequence>MERLNELCDIIEQNPKQFLDKLPWICQQCPQSKLLRAESPRFSQSHLNAILAVTRILSKIVDTTDENAKFVVLDFLQTVPKSFHRSFWPYSLSLESISAFYCSFLGYVSCLSQLMVEGYLLRAAQRSDIFAHTLIWHLQGESVEEIVKDGAFDKNASFQEILSDVRQHIVDGFTPKALNFFSREFDFFEKVTSISGALLPLPKEERVAGIRRELEKIKMQGEDLYLPTAPNKLVRVIQVDSGIPLQSAAKVPIMITFNVVDLDGDHNDVKPQACIFKVGDDCRQDVLALQVISLLGDIFQAVGLNLYLFPYGVLPTVVPNTRSRSQMGETTDGGLYEIFQQNYGLVGSTTFETARANFLISSAGYAVASLLLQPKDRHNGNLLFDDVGRLVHIDFGFILETSPGGNMRFENAHFKLSHEMTQLLDPSGVMKSKTWHQFVSLCVKGYLAARRYMDEIISTVQMMLESGLPCFSRGDPIGNLRKRFHPEMSEREAALFMINVCTDAYNKWTTAGYDLIQYLQQGVEK</sequence>
<keyword id="KW-0418">Kinase</keyword>
<keyword id="KW-0472">Membrane</keyword>
<keyword id="KW-1185">Reference proteome</keyword>
<keyword id="KW-0808">Transferase</keyword>
<organism>
    <name type="scientific">Arabidopsis thaliana</name>
    <name type="common">Mouse-ear cress</name>
    <dbReference type="NCBI Taxonomy" id="3702"/>
    <lineage>
        <taxon>Eukaryota</taxon>
        <taxon>Viridiplantae</taxon>
        <taxon>Streptophyta</taxon>
        <taxon>Embryophyta</taxon>
        <taxon>Tracheophyta</taxon>
        <taxon>Spermatophyta</taxon>
        <taxon>Magnoliopsida</taxon>
        <taxon>eudicotyledons</taxon>
        <taxon>Gunneridae</taxon>
        <taxon>Pentapetalae</taxon>
        <taxon>rosids</taxon>
        <taxon>malvids</taxon>
        <taxon>Brassicales</taxon>
        <taxon>Brassicaceae</taxon>
        <taxon>Camelineae</taxon>
        <taxon>Arabidopsis</taxon>
    </lineage>
</organism>
<proteinExistence type="inferred from homology"/>
<feature type="chain" id="PRO_0000398593" description="Phosphatidylinositol 4-kinase alpha 2">
    <location>
        <begin position="1"/>
        <end position="525"/>
    </location>
</feature>
<feature type="domain" description="PI3K/PI4K catalytic" evidence="2">
    <location>
        <begin position="239"/>
        <end position="509"/>
    </location>
</feature>
<feature type="region of interest" description="Pleckstrin homology (PH) domain conferring phosphoinositide binding specificity" evidence="1">
    <location>
        <begin position="163"/>
        <end position="278"/>
    </location>
</feature>
<feature type="region of interest" description="G-loop" evidence="2">
    <location>
        <begin position="245"/>
        <end position="251"/>
    </location>
</feature>
<feature type="region of interest" description="Catalytic loop" evidence="2">
    <location>
        <begin position="373"/>
        <end position="381"/>
    </location>
</feature>
<feature type="region of interest" description="Activation loop" evidence="2">
    <location>
        <begin position="392"/>
        <end position="417"/>
    </location>
</feature>
<dbReference type="EC" id="2.7.1.67"/>
<dbReference type="EMBL" id="AC079828">
    <property type="protein sequence ID" value="AAG50530.1"/>
    <property type="molecule type" value="Genomic_DNA"/>
</dbReference>
<dbReference type="EMBL" id="CP002684">
    <property type="protein sequence ID" value="AEE32615.1"/>
    <property type="molecule type" value="Genomic_DNA"/>
</dbReference>
<dbReference type="PIR" id="F96547">
    <property type="entry name" value="F96547"/>
</dbReference>
<dbReference type="RefSeq" id="NP_175516.1">
    <property type="nucleotide sequence ID" value="NM_103983.2"/>
</dbReference>
<dbReference type="SMR" id="Q9C680"/>
<dbReference type="FunCoup" id="Q9C680">
    <property type="interactions" value="3225"/>
</dbReference>
<dbReference type="STRING" id="3702.Q9C680"/>
<dbReference type="PaxDb" id="3702-AT1G51040.1"/>
<dbReference type="EnsemblPlants" id="AT1G51040.1">
    <property type="protein sequence ID" value="AT1G51040.1"/>
    <property type="gene ID" value="AT1G51040"/>
</dbReference>
<dbReference type="GeneID" id="841525"/>
<dbReference type="Gramene" id="AT1G51040.1">
    <property type="protein sequence ID" value="AT1G51040.1"/>
    <property type="gene ID" value="AT1G51040"/>
</dbReference>
<dbReference type="KEGG" id="ath:AT1G51040"/>
<dbReference type="Araport" id="AT1G51040"/>
<dbReference type="TAIR" id="AT1G51040"/>
<dbReference type="eggNOG" id="KOG0902">
    <property type="taxonomic scope" value="Eukaryota"/>
</dbReference>
<dbReference type="HOGENOM" id="CLU_011483_1_0_1"/>
<dbReference type="InParanoid" id="Q9C680"/>
<dbReference type="OMA" id="CEEDILM"/>
<dbReference type="PhylomeDB" id="Q9C680"/>
<dbReference type="BioCyc" id="ARA:AT1G51040-MONOMER"/>
<dbReference type="PRO" id="PR:Q9C680"/>
<dbReference type="Proteomes" id="UP000006548">
    <property type="component" value="Chromosome 1"/>
</dbReference>
<dbReference type="ExpressionAtlas" id="Q9C680">
    <property type="expression patterns" value="baseline and differential"/>
</dbReference>
<dbReference type="GO" id="GO:0016020">
    <property type="term" value="C:membrane"/>
    <property type="evidence" value="ECO:0007669"/>
    <property type="project" value="UniProtKB-SubCell"/>
</dbReference>
<dbReference type="GO" id="GO:0004430">
    <property type="term" value="F:1-phosphatidylinositol 4-kinase activity"/>
    <property type="evidence" value="ECO:0000250"/>
    <property type="project" value="UniProtKB"/>
</dbReference>
<dbReference type="GO" id="GO:0046854">
    <property type="term" value="P:phosphatidylinositol phosphate biosynthetic process"/>
    <property type="evidence" value="ECO:0007669"/>
    <property type="project" value="InterPro"/>
</dbReference>
<dbReference type="CDD" id="cd05167">
    <property type="entry name" value="PI4Kc_III_alpha"/>
    <property type="match status" value="1"/>
</dbReference>
<dbReference type="FunFam" id="1.10.1070.11:FF:000012">
    <property type="entry name" value="Phosphatidylinositol 4-kinase alpha 1"/>
    <property type="match status" value="1"/>
</dbReference>
<dbReference type="FunFam" id="3.30.1010.10:FF:000012">
    <property type="entry name" value="Phosphatidylinositol 4-kinase alpha 1"/>
    <property type="match status" value="1"/>
</dbReference>
<dbReference type="Gene3D" id="1.10.1070.11">
    <property type="entry name" value="Phosphatidylinositol 3-/4-kinase, catalytic domain"/>
    <property type="match status" value="1"/>
</dbReference>
<dbReference type="Gene3D" id="3.30.1010.10">
    <property type="entry name" value="Phosphatidylinositol 3-kinase Catalytic Subunit, Chain A, domain 4"/>
    <property type="match status" value="1"/>
</dbReference>
<dbReference type="InterPro" id="IPR011009">
    <property type="entry name" value="Kinase-like_dom_sf"/>
</dbReference>
<dbReference type="InterPro" id="IPR000403">
    <property type="entry name" value="PI3/4_kinase_cat_dom"/>
</dbReference>
<dbReference type="InterPro" id="IPR036940">
    <property type="entry name" value="PI3/4_kinase_cat_sf"/>
</dbReference>
<dbReference type="InterPro" id="IPR018936">
    <property type="entry name" value="PI3/4_kinase_CS"/>
</dbReference>
<dbReference type="InterPro" id="IPR015433">
    <property type="entry name" value="PI_Kinase"/>
</dbReference>
<dbReference type="PANTHER" id="PTHR10048:SF105">
    <property type="entry name" value="1-PHOSPHATIDYLINOSITOL 4-KINASE"/>
    <property type="match status" value="1"/>
</dbReference>
<dbReference type="PANTHER" id="PTHR10048">
    <property type="entry name" value="PHOSPHATIDYLINOSITOL KINASE"/>
    <property type="match status" value="1"/>
</dbReference>
<dbReference type="Pfam" id="PF00454">
    <property type="entry name" value="PI3_PI4_kinase"/>
    <property type="match status" value="1"/>
</dbReference>
<dbReference type="SMART" id="SM00146">
    <property type="entry name" value="PI3Kc"/>
    <property type="match status" value="1"/>
</dbReference>
<dbReference type="SUPFAM" id="SSF56112">
    <property type="entry name" value="Protein kinase-like (PK-like)"/>
    <property type="match status" value="1"/>
</dbReference>
<dbReference type="PROSITE" id="PS00915">
    <property type="entry name" value="PI3_4_KINASE_1"/>
    <property type="match status" value="1"/>
</dbReference>
<dbReference type="PROSITE" id="PS50290">
    <property type="entry name" value="PI3_4_KINASE_3"/>
    <property type="match status" value="1"/>
</dbReference>
<accession>Q9C680</accession>
<evidence type="ECO:0000250" key="1"/>
<evidence type="ECO:0000255" key="2">
    <source>
        <dbReference type="PROSITE-ProRule" id="PRU00269"/>
    </source>
</evidence>
<evidence type="ECO:0000305" key="3"/>
<name>P4KA2_ARATH</name>
<protein>
    <recommendedName>
        <fullName>Phosphatidylinositol 4-kinase alpha 2</fullName>
        <shortName>PI4-kinase alpha 2</shortName>
        <shortName>PtdIns-4-kinase alpha 2</shortName>
        <ecNumber>2.7.1.67</ecNumber>
    </recommendedName>
    <alternativeName>
        <fullName>Phosphatidylinositol 4-OH kinase alpha2</fullName>
        <shortName>AtPI4Kalpha2</shortName>
        <shortName>PI-4Kalpha2</shortName>
    </alternativeName>
</protein>
<comment type="function">
    <text evidence="1">Acts on phosphatidylinositol (PtdIns) in the first committed step in the production of the second messenger inositol-1,4,5,-trisphosphate.</text>
</comment>
<comment type="catalytic activity">
    <reaction>
        <text>a 1,2-diacyl-sn-glycero-3-phospho-(1D-myo-inositol) + ATP = a 1,2-diacyl-sn-glycero-3-phospho-(1D-myo-inositol 4-phosphate) + ADP + H(+)</text>
        <dbReference type="Rhea" id="RHEA:19877"/>
        <dbReference type="ChEBI" id="CHEBI:15378"/>
        <dbReference type="ChEBI" id="CHEBI:30616"/>
        <dbReference type="ChEBI" id="CHEBI:57880"/>
        <dbReference type="ChEBI" id="CHEBI:58178"/>
        <dbReference type="ChEBI" id="CHEBI:456216"/>
        <dbReference type="EC" id="2.7.1.67"/>
    </reaction>
</comment>
<comment type="subcellular location">
    <subcellularLocation>
        <location evidence="3">Membrane</location>
        <topology evidence="3">Peripheral membrane protein</topology>
        <orientation evidence="3">Cytoplasmic side</orientation>
    </subcellularLocation>
</comment>
<comment type="similarity">
    <text evidence="3">Belongs to the PI3/PI4-kinase family. Type III PI4K subfamily.</text>
</comment>
<gene>
    <name type="primary">PI4KA2</name>
    <name type="synonym">PI4KALPHA2</name>
    <name type="ordered locus">At1g51040</name>
    <name type="ORF">F23H24.10</name>
</gene>
<reference key="1">
    <citation type="journal article" date="2000" name="Nature">
        <title>Sequence and analysis of chromosome 1 of the plant Arabidopsis thaliana.</title>
        <authorList>
            <person name="Theologis A."/>
            <person name="Ecker J.R."/>
            <person name="Palm C.J."/>
            <person name="Federspiel N.A."/>
            <person name="Kaul S."/>
            <person name="White O."/>
            <person name="Alonso J."/>
            <person name="Altafi H."/>
            <person name="Araujo R."/>
            <person name="Bowman C.L."/>
            <person name="Brooks S.Y."/>
            <person name="Buehler E."/>
            <person name="Chan A."/>
            <person name="Chao Q."/>
            <person name="Chen H."/>
            <person name="Cheuk R.F."/>
            <person name="Chin C.W."/>
            <person name="Chung M.K."/>
            <person name="Conn L."/>
            <person name="Conway A.B."/>
            <person name="Conway A.R."/>
            <person name="Creasy T.H."/>
            <person name="Dewar K."/>
            <person name="Dunn P."/>
            <person name="Etgu P."/>
            <person name="Feldblyum T.V."/>
            <person name="Feng J.-D."/>
            <person name="Fong B."/>
            <person name="Fujii C.Y."/>
            <person name="Gill J.E."/>
            <person name="Goldsmith A.D."/>
            <person name="Haas B."/>
            <person name="Hansen N.F."/>
            <person name="Hughes B."/>
            <person name="Huizar L."/>
            <person name="Hunter J.L."/>
            <person name="Jenkins J."/>
            <person name="Johnson-Hopson C."/>
            <person name="Khan S."/>
            <person name="Khaykin E."/>
            <person name="Kim C.J."/>
            <person name="Koo H.L."/>
            <person name="Kremenetskaia I."/>
            <person name="Kurtz D.B."/>
            <person name="Kwan A."/>
            <person name="Lam B."/>
            <person name="Langin-Hooper S."/>
            <person name="Lee A."/>
            <person name="Lee J.M."/>
            <person name="Lenz C.A."/>
            <person name="Li J.H."/>
            <person name="Li Y.-P."/>
            <person name="Lin X."/>
            <person name="Liu S.X."/>
            <person name="Liu Z.A."/>
            <person name="Luros J.S."/>
            <person name="Maiti R."/>
            <person name="Marziali A."/>
            <person name="Militscher J."/>
            <person name="Miranda M."/>
            <person name="Nguyen M."/>
            <person name="Nierman W.C."/>
            <person name="Osborne B.I."/>
            <person name="Pai G."/>
            <person name="Peterson J."/>
            <person name="Pham P.K."/>
            <person name="Rizzo M."/>
            <person name="Rooney T."/>
            <person name="Rowley D."/>
            <person name="Sakano H."/>
            <person name="Salzberg S.L."/>
            <person name="Schwartz J.R."/>
            <person name="Shinn P."/>
            <person name="Southwick A.M."/>
            <person name="Sun H."/>
            <person name="Tallon L.J."/>
            <person name="Tambunga G."/>
            <person name="Toriumi M.J."/>
            <person name="Town C.D."/>
            <person name="Utterback T."/>
            <person name="Van Aken S."/>
            <person name="Vaysberg M."/>
            <person name="Vysotskaia V.S."/>
            <person name="Walker M."/>
            <person name="Wu D."/>
            <person name="Yu G."/>
            <person name="Fraser C.M."/>
            <person name="Venter J.C."/>
            <person name="Davis R.W."/>
        </authorList>
    </citation>
    <scope>NUCLEOTIDE SEQUENCE [LARGE SCALE GENOMIC DNA]</scope>
    <source>
        <strain>cv. Columbia</strain>
    </source>
</reference>
<reference key="2">
    <citation type="journal article" date="2017" name="Plant J.">
        <title>Araport11: a complete reannotation of the Arabidopsis thaliana reference genome.</title>
        <authorList>
            <person name="Cheng C.Y."/>
            <person name="Krishnakumar V."/>
            <person name="Chan A.P."/>
            <person name="Thibaud-Nissen F."/>
            <person name="Schobel S."/>
            <person name="Town C.D."/>
        </authorList>
    </citation>
    <scope>GENOME REANNOTATION</scope>
    <source>
        <strain>cv. Columbia</strain>
    </source>
</reference>
<reference key="3">
    <citation type="journal article" date="2002" name="Plant Physiol.">
        <title>Inositol phospholipid metabolism in Arabidopsis. Characterized and putative isoforms of inositol phospholipid kinase and phosphoinositide-specific phospholipase C.</title>
        <authorList>
            <person name="Mueller-Roeber B."/>
            <person name="Pical C."/>
        </authorList>
    </citation>
    <scope>GENE FAMILY</scope>
    <scope>NOMENCLATURE</scope>
</reference>